<sequence>MNPIVAATSVVSAGLAVGLAAIGPGMGQGTAAGYAVEGIARQPEAEGKIRGALLLSFAFMESLTIYGLVVALALLFANPFAG</sequence>
<evidence type="ECO:0000255" key="1"/>
<evidence type="ECO:0000255" key="2">
    <source>
        <dbReference type="HAMAP-Rule" id="MF_01396"/>
    </source>
</evidence>
<evidence type="ECO:0000269" key="3">
    <source>
    </source>
</evidence>
<evidence type="ECO:0000303" key="4">
    <source>
    </source>
</evidence>
<organism>
    <name type="scientific">Chlamydomonas reinhardtii</name>
    <name type="common">Chlamydomonas smithii</name>
    <dbReference type="NCBI Taxonomy" id="3055"/>
    <lineage>
        <taxon>Eukaryota</taxon>
        <taxon>Viridiplantae</taxon>
        <taxon>Chlorophyta</taxon>
        <taxon>core chlorophytes</taxon>
        <taxon>Chlorophyceae</taxon>
        <taxon>CS clade</taxon>
        <taxon>Chlamydomonadales</taxon>
        <taxon>Chlamydomonadaceae</taxon>
        <taxon>Chlamydomonas</taxon>
    </lineage>
</organism>
<dbReference type="EMBL" id="X90559">
    <property type="protein sequence ID" value="CAA62149.1"/>
    <property type="molecule type" value="Genomic_DNA"/>
</dbReference>
<dbReference type="EMBL" id="FJ423446">
    <property type="protein sequence ID" value="ACJ50140.1"/>
    <property type="molecule type" value="Genomic_DNA"/>
</dbReference>
<dbReference type="EMBL" id="BK000554">
    <property type="protein sequence ID" value="DAA00954.1"/>
    <property type="molecule type" value="Genomic_DNA"/>
</dbReference>
<dbReference type="PIR" id="S58349">
    <property type="entry name" value="S58349"/>
</dbReference>
<dbReference type="RefSeq" id="NP_958409.1">
    <property type="nucleotide sequence ID" value="NC_005353.1"/>
</dbReference>
<dbReference type="SMR" id="Q37304"/>
<dbReference type="FunCoup" id="Q37304">
    <property type="interactions" value="79"/>
</dbReference>
<dbReference type="STRING" id="3055.Q37304"/>
<dbReference type="PaxDb" id="3055-DAA00954"/>
<dbReference type="GeneID" id="2717044"/>
<dbReference type="KEGG" id="cre:ChreCp053"/>
<dbReference type="eggNOG" id="KOG0232">
    <property type="taxonomic scope" value="Eukaryota"/>
</dbReference>
<dbReference type="HOGENOM" id="CLU_148047_2_0_1"/>
<dbReference type="InParanoid" id="Q37304"/>
<dbReference type="BioCyc" id="CHLAMY:CHRECP053-MONOMER"/>
<dbReference type="Proteomes" id="UP000006906">
    <property type="component" value="Chloroplast"/>
</dbReference>
<dbReference type="GO" id="GO:0009535">
    <property type="term" value="C:chloroplast thylakoid membrane"/>
    <property type="evidence" value="ECO:0007669"/>
    <property type="project" value="UniProtKB-SubCell"/>
</dbReference>
<dbReference type="GO" id="GO:0045259">
    <property type="term" value="C:proton-transporting ATP synthase complex"/>
    <property type="evidence" value="ECO:0007669"/>
    <property type="project" value="UniProtKB-KW"/>
</dbReference>
<dbReference type="GO" id="GO:0033177">
    <property type="term" value="C:proton-transporting two-sector ATPase complex, proton-transporting domain"/>
    <property type="evidence" value="ECO:0007669"/>
    <property type="project" value="InterPro"/>
</dbReference>
<dbReference type="GO" id="GO:0008289">
    <property type="term" value="F:lipid binding"/>
    <property type="evidence" value="ECO:0007669"/>
    <property type="project" value="UniProtKB-KW"/>
</dbReference>
<dbReference type="GO" id="GO:0046933">
    <property type="term" value="F:proton-transporting ATP synthase activity, rotational mechanism"/>
    <property type="evidence" value="ECO:0007669"/>
    <property type="project" value="UniProtKB-UniRule"/>
</dbReference>
<dbReference type="GO" id="GO:0015986">
    <property type="term" value="P:proton motive force-driven ATP synthesis"/>
    <property type="evidence" value="ECO:0000318"/>
    <property type="project" value="GO_Central"/>
</dbReference>
<dbReference type="CDD" id="cd18183">
    <property type="entry name" value="ATP-synt_Fo_c_ATPH"/>
    <property type="match status" value="1"/>
</dbReference>
<dbReference type="FunFam" id="1.20.20.10:FF:000001">
    <property type="entry name" value="ATP synthase subunit c, chloroplastic"/>
    <property type="match status" value="1"/>
</dbReference>
<dbReference type="Gene3D" id="1.20.20.10">
    <property type="entry name" value="F1F0 ATP synthase subunit C"/>
    <property type="match status" value="1"/>
</dbReference>
<dbReference type="HAMAP" id="MF_01396">
    <property type="entry name" value="ATP_synth_c_bact"/>
    <property type="match status" value="1"/>
</dbReference>
<dbReference type="InterPro" id="IPR005953">
    <property type="entry name" value="ATP_synth_csu_bac/chlpt"/>
</dbReference>
<dbReference type="InterPro" id="IPR000454">
    <property type="entry name" value="ATP_synth_F0_csu"/>
</dbReference>
<dbReference type="InterPro" id="IPR020537">
    <property type="entry name" value="ATP_synth_F0_csu_DDCD_BS"/>
</dbReference>
<dbReference type="InterPro" id="IPR038662">
    <property type="entry name" value="ATP_synth_F0_csu_sf"/>
</dbReference>
<dbReference type="InterPro" id="IPR002379">
    <property type="entry name" value="ATPase_proteolipid_c-like_dom"/>
</dbReference>
<dbReference type="InterPro" id="IPR035921">
    <property type="entry name" value="F/V-ATP_Csub_sf"/>
</dbReference>
<dbReference type="NCBIfam" id="TIGR01260">
    <property type="entry name" value="ATP_synt_c"/>
    <property type="match status" value="1"/>
</dbReference>
<dbReference type="NCBIfam" id="NF005608">
    <property type="entry name" value="PRK07354.1"/>
    <property type="match status" value="1"/>
</dbReference>
<dbReference type="PANTHER" id="PTHR10031">
    <property type="entry name" value="ATP SYNTHASE LIPID-BINDING PROTEIN, MITOCHONDRIAL"/>
    <property type="match status" value="1"/>
</dbReference>
<dbReference type="PANTHER" id="PTHR10031:SF0">
    <property type="entry name" value="ATPASE PROTEIN 9"/>
    <property type="match status" value="1"/>
</dbReference>
<dbReference type="Pfam" id="PF00137">
    <property type="entry name" value="ATP-synt_C"/>
    <property type="match status" value="1"/>
</dbReference>
<dbReference type="PRINTS" id="PR00124">
    <property type="entry name" value="ATPASEC"/>
</dbReference>
<dbReference type="SUPFAM" id="SSF81333">
    <property type="entry name" value="F1F0 ATP synthase subunit C"/>
    <property type="match status" value="1"/>
</dbReference>
<dbReference type="PROSITE" id="PS00605">
    <property type="entry name" value="ATPASE_C"/>
    <property type="match status" value="1"/>
</dbReference>
<name>ATPH_CHLRE</name>
<protein>
    <recommendedName>
        <fullName evidence="2 4">ATP synthase subunit c, chloroplastic</fullName>
    </recommendedName>
    <alternativeName>
        <fullName evidence="2">ATP synthase F(0) sector subunit c</fullName>
    </alternativeName>
    <alternativeName>
        <fullName evidence="2">ATPase subunit III</fullName>
    </alternativeName>
    <alternativeName>
        <fullName evidence="2">F-type ATPase subunit c</fullName>
        <shortName evidence="2">F-ATPase subunit c</shortName>
    </alternativeName>
    <alternativeName>
        <fullName evidence="2">Lipid-binding protein</fullName>
    </alternativeName>
</protein>
<feature type="chain" id="PRO_0000112184" description="ATP synthase subunit c, chloroplastic">
    <location>
        <begin position="1"/>
        <end position="82"/>
    </location>
</feature>
<feature type="transmembrane region" description="Helical" evidence="2">
    <location>
        <begin position="3"/>
        <end position="23"/>
    </location>
</feature>
<feature type="transmembrane region" description="Helical" evidence="2">
    <location>
        <begin position="57"/>
        <end position="77"/>
    </location>
</feature>
<feature type="site" description="Reversibly protonated during proton transport" evidence="2">
    <location>
        <position position="61"/>
    </location>
</feature>
<feature type="modified residue" description="N-formylmethionine" evidence="3">
    <location>
        <position position="1"/>
    </location>
</feature>
<feature type="sequence variant" description="In strain: CC-503.">
    <original>T</original>
    <variation>A</variation>
    <location>
        <position position="8"/>
    </location>
</feature>
<comment type="function">
    <text evidence="2 3">F(1)F(0) ATP synthase produces ATP from ADP in the presence of a proton or sodium gradient. F-type ATPases consist of two structural domains, F(1) containing the extramembraneous catalytic core and F(0) containing the membrane proton channel, linked together by a central stalk and a peripheral stalk. During catalysis, ATP synthesis in the catalytic domain of F(1) is coupled via a rotary mechanism of the central stalk subunits to proton translocation.</text>
</comment>
<comment type="function">
    <text evidence="2">Key component of the F(0) channel; it plays a direct role in translocation across the membrane. A homomeric c-ring of between 10-14 subunits forms the central stalk rotor element with the F(1) delta and epsilon subunits.</text>
</comment>
<comment type="subunit">
    <text evidence="2 3">F-type ATPases have 2 components, F(1) - the catalytic core - and F(0) - the membrane proton channel. F(1) has five subunits: alpha(3), beta(3), gamma(1), delta(1), epsilon(1). F(0) has four main subunits: a(1), b(1), b'(1) and c(10-14). The alpha and beta chains form an alternating ring which encloses part of the gamma chain. F(1) is attached to F(0) by a central stalk formed by the gamma and epsilon chains, while a peripheral stalk is formed by the delta, b and b' chains.</text>
</comment>
<comment type="subcellular location">
    <subcellularLocation>
        <location evidence="3">Plastid</location>
        <location evidence="3">Chloroplast thylakoid membrane</location>
        <topology evidence="1">Multi-pass membrane protein</topology>
    </subcellularLocation>
</comment>
<comment type="miscellaneous">
    <text>In plastids the F-type ATPase is also known as CF(1)CF(0).</text>
</comment>
<comment type="miscellaneous">
    <text>Dicyclohexylcarbodiimide (DCDD) inhibits ATPase.</text>
</comment>
<comment type="similarity">
    <text evidence="2">Belongs to the ATPase C chain family.</text>
</comment>
<accession>Q37304</accession>
<accession>B7U1J3</accession>
<accession>Q9T2G4</accession>
<proteinExistence type="evidence at protein level"/>
<geneLocation type="chloroplast"/>
<gene>
    <name evidence="2 4" type="primary">atpH</name>
</gene>
<reference key="1">
    <citation type="journal article" date="1997" name="EMBO J.">
        <title>Disruption of the plastid ycf10 open reading frame affects uptake of inorganic carbon in the chloroplast of Chlamydomonas.</title>
        <authorList>
            <person name="Rolland N."/>
            <person name="Dorne A.-J."/>
            <person name="Amoroso G."/>
            <person name="Sueltemeyer D.F."/>
            <person name="Joyard J."/>
            <person name="Rochaix J.-D."/>
        </authorList>
    </citation>
    <scope>NUCLEOTIDE SEQUENCE [GENOMIC DNA]</scope>
    <source>
        <strain>cw15</strain>
    </source>
</reference>
<reference key="2">
    <citation type="journal article" date="2009" name="BMC Evol. Biol.">
        <title>Nucleotide diversity of the Chlamydomonas reinhardtii plastid genome: addressing the mutational-hazard hypothesis.</title>
        <authorList>
            <person name="Smith D.R."/>
            <person name="Lee R.W."/>
        </authorList>
    </citation>
    <scope>NUCLEOTIDE SEQUENCE [LARGE SCALE GENOMIC DNA]</scope>
    <source>
        <strain>CC-503</strain>
    </source>
</reference>
<reference key="3">
    <citation type="journal article" date="1995" name="FEBS Lett.">
        <title>Isolation of CF0CF1 from Chlamydomonas reinhardtii cw15 and the N-terminal amino acid sequences of the CF0CF1 subunits.</title>
        <authorList>
            <person name="Fiedler H.R."/>
            <person name="Schmid R."/>
            <person name="Leu S."/>
            <person name="Shavit N."/>
            <person name="Strotmann H."/>
        </authorList>
    </citation>
    <scope>PROTEIN SEQUENCE OF 1-32</scope>
    <scope>FUNCTION</scope>
    <scope>SUBUNIT</scope>
    <scope>SUBCELLULAR LOCATION</scope>
    <scope>FORMYLATION AT MET-1</scope>
    <source>
        <strain>cw15</strain>
    </source>
</reference>
<reference key="4">
    <citation type="journal article" date="2002" name="Plant Cell">
        <title>The Chlamydomonas reinhardtii plastid chromosome: islands of genes in a sea of repeats.</title>
        <authorList>
            <person name="Maul J.E."/>
            <person name="Lilly J.W."/>
            <person name="Cui L."/>
            <person name="dePamphilis C.W."/>
            <person name="Miller W."/>
            <person name="Harris E.H."/>
            <person name="Stern D.B."/>
        </authorList>
    </citation>
    <scope>IDENTIFICATION</scope>
    <scope>COMPLETE PLASTID GENOME</scope>
</reference>
<keyword id="KW-0066">ATP synthesis</keyword>
<keyword id="KW-0138">CF(0)</keyword>
<keyword id="KW-0150">Chloroplast</keyword>
<keyword id="KW-0903">Direct protein sequencing</keyword>
<keyword id="KW-0291">Formylation</keyword>
<keyword id="KW-0375">Hydrogen ion transport</keyword>
<keyword id="KW-0406">Ion transport</keyword>
<keyword id="KW-0446">Lipid-binding</keyword>
<keyword id="KW-0472">Membrane</keyword>
<keyword id="KW-0934">Plastid</keyword>
<keyword id="KW-1185">Reference proteome</keyword>
<keyword id="KW-0793">Thylakoid</keyword>
<keyword id="KW-0812">Transmembrane</keyword>
<keyword id="KW-1133">Transmembrane helix</keyword>
<keyword id="KW-0813">Transport</keyword>